<organism>
    <name type="scientific">Arabidopsis thaliana</name>
    <name type="common">Mouse-ear cress</name>
    <dbReference type="NCBI Taxonomy" id="3702"/>
    <lineage>
        <taxon>Eukaryota</taxon>
        <taxon>Viridiplantae</taxon>
        <taxon>Streptophyta</taxon>
        <taxon>Embryophyta</taxon>
        <taxon>Tracheophyta</taxon>
        <taxon>Spermatophyta</taxon>
        <taxon>Magnoliopsida</taxon>
        <taxon>eudicotyledons</taxon>
        <taxon>Gunneridae</taxon>
        <taxon>Pentapetalae</taxon>
        <taxon>rosids</taxon>
        <taxon>malvids</taxon>
        <taxon>Brassicales</taxon>
        <taxon>Brassicaceae</taxon>
        <taxon>Camelineae</taxon>
        <taxon>Arabidopsis</taxon>
    </lineage>
</organism>
<proteinExistence type="evidence at protein level"/>
<dbReference type="EMBL" id="U39452">
    <property type="protein sequence ID" value="AAC49163.1"/>
    <property type="molecule type" value="Genomic_DNA"/>
</dbReference>
<dbReference type="EMBL" id="U39451">
    <property type="protein sequence ID" value="AAC49162.1"/>
    <property type="molecule type" value="mRNA"/>
</dbReference>
<dbReference type="EMBL" id="AC003981">
    <property type="protein sequence ID" value="AAF99783.1"/>
    <property type="status" value="ALT_FRAME"/>
    <property type="molecule type" value="Genomic_DNA"/>
</dbReference>
<dbReference type="EMBL" id="CP002684">
    <property type="protein sequence ID" value="AEE28306.1"/>
    <property type="molecule type" value="Genomic_DNA"/>
</dbReference>
<dbReference type="EMBL" id="BT000970">
    <property type="protein sequence ID" value="AAN41370.1"/>
    <property type="molecule type" value="mRNA"/>
</dbReference>
<dbReference type="PIR" id="D86218">
    <property type="entry name" value="D86218"/>
</dbReference>
<dbReference type="PIR" id="T00709">
    <property type="entry name" value="T00709"/>
</dbReference>
<dbReference type="RefSeq" id="NP_172332.1">
    <property type="nucleotide sequence ID" value="NM_100729.4"/>
</dbReference>
<dbReference type="SMR" id="Q42374"/>
<dbReference type="BioGRID" id="22619">
    <property type="interactions" value="27"/>
</dbReference>
<dbReference type="FunCoup" id="Q42374">
    <property type="interactions" value="643"/>
</dbReference>
<dbReference type="IntAct" id="Q42374">
    <property type="interactions" value="22"/>
</dbReference>
<dbReference type="MINT" id="Q42374"/>
<dbReference type="STRING" id="3702.Q42374"/>
<dbReference type="TCDB" id="8.A.91.1.1">
    <property type="family name" value="the syntaxin (syntaxin) family"/>
</dbReference>
<dbReference type="iPTMnet" id="Q42374"/>
<dbReference type="PaxDb" id="3702-AT1G08560.1"/>
<dbReference type="ProteomicsDB" id="226770"/>
<dbReference type="EnsemblPlants" id="AT1G08560.1">
    <property type="protein sequence ID" value="AT1G08560.1"/>
    <property type="gene ID" value="AT1G08560"/>
</dbReference>
<dbReference type="GeneID" id="837378"/>
<dbReference type="Gramene" id="AT1G08560.1">
    <property type="protein sequence ID" value="AT1G08560.1"/>
    <property type="gene ID" value="AT1G08560"/>
</dbReference>
<dbReference type="KEGG" id="ath:AT1G08560"/>
<dbReference type="Araport" id="AT1G08560"/>
<dbReference type="TAIR" id="AT1G08560">
    <property type="gene designation" value="SYP111"/>
</dbReference>
<dbReference type="eggNOG" id="KOG0810">
    <property type="taxonomic scope" value="Eukaryota"/>
</dbReference>
<dbReference type="HOGENOM" id="CLU_042423_1_1_1"/>
<dbReference type="InParanoid" id="Q42374"/>
<dbReference type="OMA" id="VLHASHY"/>
<dbReference type="PhylomeDB" id="Q42374"/>
<dbReference type="PRO" id="PR:Q42374"/>
<dbReference type="Proteomes" id="UP000006548">
    <property type="component" value="Chromosome 1"/>
</dbReference>
<dbReference type="ExpressionAtlas" id="Q42374">
    <property type="expression patterns" value="baseline and differential"/>
</dbReference>
<dbReference type="GO" id="GO:0009504">
    <property type="term" value="C:cell plate"/>
    <property type="evidence" value="ECO:0000314"/>
    <property type="project" value="TAIR"/>
</dbReference>
<dbReference type="GO" id="GO:0012505">
    <property type="term" value="C:endomembrane system"/>
    <property type="evidence" value="ECO:0000314"/>
    <property type="project" value="TAIR"/>
</dbReference>
<dbReference type="GO" id="GO:0009524">
    <property type="term" value="C:phragmoplast"/>
    <property type="evidence" value="ECO:0000314"/>
    <property type="project" value="TAIR"/>
</dbReference>
<dbReference type="GO" id="GO:0005886">
    <property type="term" value="C:plasma membrane"/>
    <property type="evidence" value="ECO:0007005"/>
    <property type="project" value="TAIR"/>
</dbReference>
<dbReference type="GO" id="GO:0009506">
    <property type="term" value="C:plasmodesma"/>
    <property type="evidence" value="ECO:0007005"/>
    <property type="project" value="TAIR"/>
</dbReference>
<dbReference type="GO" id="GO:0005484">
    <property type="term" value="F:SNAP receptor activity"/>
    <property type="evidence" value="ECO:0007669"/>
    <property type="project" value="InterPro"/>
</dbReference>
<dbReference type="GO" id="GO:0051301">
    <property type="term" value="P:cell division"/>
    <property type="evidence" value="ECO:0007669"/>
    <property type="project" value="UniProtKB-KW"/>
</dbReference>
<dbReference type="GO" id="GO:0006886">
    <property type="term" value="P:intracellular protein transport"/>
    <property type="evidence" value="ECO:0007669"/>
    <property type="project" value="InterPro"/>
</dbReference>
<dbReference type="GO" id="GO:0016192">
    <property type="term" value="P:vesicle-mediated transport"/>
    <property type="evidence" value="ECO:0007669"/>
    <property type="project" value="InterPro"/>
</dbReference>
<dbReference type="CDD" id="cd15848">
    <property type="entry name" value="SNARE_syntaxin1-like"/>
    <property type="match status" value="1"/>
</dbReference>
<dbReference type="CDD" id="cd00179">
    <property type="entry name" value="SynN"/>
    <property type="match status" value="1"/>
</dbReference>
<dbReference type="FunFam" id="1.20.58.70:FF:000003">
    <property type="entry name" value="Qa-SNARE, Sso1/Syntaxin1-type, SYP12A-group"/>
    <property type="match status" value="1"/>
</dbReference>
<dbReference type="FunFam" id="1.20.5.110:FF:000008">
    <property type="entry name" value="Syntaxin 132"/>
    <property type="match status" value="1"/>
</dbReference>
<dbReference type="Gene3D" id="1.20.5.110">
    <property type="match status" value="1"/>
</dbReference>
<dbReference type="Gene3D" id="1.20.58.70">
    <property type="match status" value="1"/>
</dbReference>
<dbReference type="InterPro" id="IPR010989">
    <property type="entry name" value="SNARE"/>
</dbReference>
<dbReference type="InterPro" id="IPR045242">
    <property type="entry name" value="Syntaxin"/>
</dbReference>
<dbReference type="InterPro" id="IPR006012">
    <property type="entry name" value="Syntaxin/epimorphin_CS"/>
</dbReference>
<dbReference type="InterPro" id="IPR006011">
    <property type="entry name" value="Syntaxin_N"/>
</dbReference>
<dbReference type="InterPro" id="IPR000727">
    <property type="entry name" value="T_SNARE_dom"/>
</dbReference>
<dbReference type="PANTHER" id="PTHR19957">
    <property type="entry name" value="SYNTAXIN"/>
    <property type="match status" value="1"/>
</dbReference>
<dbReference type="PANTHER" id="PTHR19957:SF251">
    <property type="entry name" value="SYNTAXIN-RELATED PROTEIN KNOLLE"/>
    <property type="match status" value="1"/>
</dbReference>
<dbReference type="Pfam" id="PF05739">
    <property type="entry name" value="SNARE"/>
    <property type="match status" value="1"/>
</dbReference>
<dbReference type="Pfam" id="PF00804">
    <property type="entry name" value="Syntaxin"/>
    <property type="match status" value="1"/>
</dbReference>
<dbReference type="SMART" id="SM00503">
    <property type="entry name" value="SynN"/>
    <property type="match status" value="1"/>
</dbReference>
<dbReference type="SMART" id="SM00397">
    <property type="entry name" value="t_SNARE"/>
    <property type="match status" value="1"/>
</dbReference>
<dbReference type="SUPFAM" id="SSF47661">
    <property type="entry name" value="t-snare proteins"/>
    <property type="match status" value="1"/>
</dbReference>
<dbReference type="PROSITE" id="PS00914">
    <property type="entry name" value="SYNTAXIN"/>
    <property type="match status" value="1"/>
</dbReference>
<dbReference type="PROSITE" id="PS50192">
    <property type="entry name" value="T_SNARE"/>
    <property type="match status" value="1"/>
</dbReference>
<gene>
    <name type="primary">KN</name>
    <name type="synonym">SYP111</name>
    <name type="ordered locus">At1g08560</name>
    <name type="ORF">F22O13.4</name>
</gene>
<accession>Q42374</accession>
<accession>Q8VXY8</accession>
<accession>Q9FRS8</accession>
<protein>
    <recommendedName>
        <fullName>Syntaxin-related protein KNOLLE</fullName>
    </recommendedName>
    <alternativeName>
        <fullName>Syntaxin-111</fullName>
        <shortName>AtSYP111</shortName>
    </alternativeName>
</protein>
<feature type="chain" id="PRO_0000210244" description="Syntaxin-related protein KNOLLE">
    <location>
        <begin position="1"/>
        <end position="310"/>
    </location>
</feature>
<feature type="topological domain" description="Cytoplasmic" evidence="2">
    <location>
        <begin position="1"/>
        <end position="283"/>
    </location>
</feature>
<feature type="transmembrane region" description="Helical; Anchor for type IV membrane protein" evidence="2">
    <location>
        <begin position="284"/>
        <end position="304"/>
    </location>
</feature>
<feature type="topological domain" description="Vesicular" evidence="2">
    <location>
        <begin position="305"/>
        <end position="310"/>
    </location>
</feature>
<feature type="domain" description="t-SNARE coiled-coil homology" evidence="3">
    <location>
        <begin position="212"/>
        <end position="274"/>
    </location>
</feature>
<feature type="coiled-coil region" evidence="2">
    <location>
        <begin position="94"/>
        <end position="159"/>
    </location>
</feature>
<feature type="modified residue" description="N-acetylmethionine" evidence="1">
    <location>
        <position position="1"/>
    </location>
</feature>
<comment type="function">
    <text>Involved in cytokinesis. Acts as a cell plate-specific syntaxin, required for the fusion of vesicles at the plane of cell division.</text>
</comment>
<comment type="subunit">
    <text evidence="4 5 6">Interacts with SNAP33 and/or NPSN11 to form a t-SNARE complex and with KEULE.</text>
</comment>
<comment type="subcellular location">
    <subcellularLocation>
        <location>Membrane</location>
        <topology>Single-pass type IV membrane protein</topology>
    </subcellularLocation>
</comment>
<comment type="tissue specificity">
    <text>Abundant in flowers and developing siliques. A low level expression is seen in the seedlings, roots, and leaves.</text>
</comment>
<comment type="developmental stage">
    <text>It is detected throughout embryogenesis until expression declines in mature embryo. During embryogenesis it is detected in patches of single cells or small cell groups.</text>
</comment>
<comment type="induction">
    <text>At or soon after the onset of mitosis.</text>
</comment>
<comment type="similarity">
    <text evidence="7">Belongs to the syntaxin family.</text>
</comment>
<comment type="sequence caution" evidence="7">
    <conflict type="frameshift">
        <sequence resource="EMBL-CDS" id="AAF99783"/>
    </conflict>
</comment>
<reference key="1">
    <citation type="journal article" date="1996" name="Cell">
        <title>Cytokinesis in the Arabidopsis embryo involves the syntaxin-related KNOLLE gene product.</title>
        <authorList>
            <person name="Lukowitz W."/>
            <person name="Mayer U."/>
            <person name="Juergens G."/>
        </authorList>
    </citation>
    <scope>NUCLEOTIDE SEQUENCE [GENOMIC DNA / MRNA]</scope>
    <source>
        <strain>cv. Columbia</strain>
    </source>
</reference>
<reference key="2">
    <citation type="journal article" date="2000" name="Nature">
        <title>Sequence and analysis of chromosome 1 of the plant Arabidopsis thaliana.</title>
        <authorList>
            <person name="Theologis A."/>
            <person name="Ecker J.R."/>
            <person name="Palm C.J."/>
            <person name="Federspiel N.A."/>
            <person name="Kaul S."/>
            <person name="White O."/>
            <person name="Alonso J."/>
            <person name="Altafi H."/>
            <person name="Araujo R."/>
            <person name="Bowman C.L."/>
            <person name="Brooks S.Y."/>
            <person name="Buehler E."/>
            <person name="Chan A."/>
            <person name="Chao Q."/>
            <person name="Chen H."/>
            <person name="Cheuk R.F."/>
            <person name="Chin C.W."/>
            <person name="Chung M.K."/>
            <person name="Conn L."/>
            <person name="Conway A.B."/>
            <person name="Conway A.R."/>
            <person name="Creasy T.H."/>
            <person name="Dewar K."/>
            <person name="Dunn P."/>
            <person name="Etgu P."/>
            <person name="Feldblyum T.V."/>
            <person name="Feng J.-D."/>
            <person name="Fong B."/>
            <person name="Fujii C.Y."/>
            <person name="Gill J.E."/>
            <person name="Goldsmith A.D."/>
            <person name="Haas B."/>
            <person name="Hansen N.F."/>
            <person name="Hughes B."/>
            <person name="Huizar L."/>
            <person name="Hunter J.L."/>
            <person name="Jenkins J."/>
            <person name="Johnson-Hopson C."/>
            <person name="Khan S."/>
            <person name="Khaykin E."/>
            <person name="Kim C.J."/>
            <person name="Koo H.L."/>
            <person name="Kremenetskaia I."/>
            <person name="Kurtz D.B."/>
            <person name="Kwan A."/>
            <person name="Lam B."/>
            <person name="Langin-Hooper S."/>
            <person name="Lee A."/>
            <person name="Lee J.M."/>
            <person name="Lenz C.A."/>
            <person name="Li J.H."/>
            <person name="Li Y.-P."/>
            <person name="Lin X."/>
            <person name="Liu S.X."/>
            <person name="Liu Z.A."/>
            <person name="Luros J.S."/>
            <person name="Maiti R."/>
            <person name="Marziali A."/>
            <person name="Militscher J."/>
            <person name="Miranda M."/>
            <person name="Nguyen M."/>
            <person name="Nierman W.C."/>
            <person name="Osborne B.I."/>
            <person name="Pai G."/>
            <person name="Peterson J."/>
            <person name="Pham P.K."/>
            <person name="Rizzo M."/>
            <person name="Rooney T."/>
            <person name="Rowley D."/>
            <person name="Sakano H."/>
            <person name="Salzberg S.L."/>
            <person name="Schwartz J.R."/>
            <person name="Shinn P."/>
            <person name="Southwick A.M."/>
            <person name="Sun H."/>
            <person name="Tallon L.J."/>
            <person name="Tambunga G."/>
            <person name="Toriumi M.J."/>
            <person name="Town C.D."/>
            <person name="Utterback T."/>
            <person name="Van Aken S."/>
            <person name="Vaysberg M."/>
            <person name="Vysotskaia V.S."/>
            <person name="Walker M."/>
            <person name="Wu D."/>
            <person name="Yu G."/>
            <person name="Fraser C.M."/>
            <person name="Venter J.C."/>
            <person name="Davis R.W."/>
        </authorList>
    </citation>
    <scope>NUCLEOTIDE SEQUENCE [LARGE SCALE GENOMIC DNA]</scope>
    <source>
        <strain>cv. Columbia</strain>
    </source>
</reference>
<reference key="3">
    <citation type="journal article" date="2017" name="Plant J.">
        <title>Araport11: a complete reannotation of the Arabidopsis thaliana reference genome.</title>
        <authorList>
            <person name="Cheng C.Y."/>
            <person name="Krishnakumar V."/>
            <person name="Chan A.P."/>
            <person name="Thibaud-Nissen F."/>
            <person name="Schobel S."/>
            <person name="Town C.D."/>
        </authorList>
    </citation>
    <scope>GENOME REANNOTATION</scope>
    <source>
        <strain>cv. Columbia</strain>
    </source>
</reference>
<reference key="4">
    <citation type="journal article" date="2003" name="Science">
        <title>Empirical analysis of transcriptional activity in the Arabidopsis genome.</title>
        <authorList>
            <person name="Yamada K."/>
            <person name="Lim J."/>
            <person name="Dale J.M."/>
            <person name="Chen H."/>
            <person name="Shinn P."/>
            <person name="Palm C.J."/>
            <person name="Southwick A.M."/>
            <person name="Wu H.C."/>
            <person name="Kim C.J."/>
            <person name="Nguyen M."/>
            <person name="Pham P.K."/>
            <person name="Cheuk R.F."/>
            <person name="Karlin-Newmann G."/>
            <person name="Liu S.X."/>
            <person name="Lam B."/>
            <person name="Sakano H."/>
            <person name="Wu T."/>
            <person name="Yu G."/>
            <person name="Miranda M."/>
            <person name="Quach H.L."/>
            <person name="Tripp M."/>
            <person name="Chang C.H."/>
            <person name="Lee J.M."/>
            <person name="Toriumi M.J."/>
            <person name="Chan M.M."/>
            <person name="Tang C.C."/>
            <person name="Onodera C.S."/>
            <person name="Deng J.M."/>
            <person name="Akiyama K."/>
            <person name="Ansari Y."/>
            <person name="Arakawa T."/>
            <person name="Banh J."/>
            <person name="Banno F."/>
            <person name="Bowser L."/>
            <person name="Brooks S.Y."/>
            <person name="Carninci P."/>
            <person name="Chao Q."/>
            <person name="Choy N."/>
            <person name="Enju A."/>
            <person name="Goldsmith A.D."/>
            <person name="Gurjal M."/>
            <person name="Hansen N.F."/>
            <person name="Hayashizaki Y."/>
            <person name="Johnson-Hopson C."/>
            <person name="Hsuan V.W."/>
            <person name="Iida K."/>
            <person name="Karnes M."/>
            <person name="Khan S."/>
            <person name="Koesema E."/>
            <person name="Ishida J."/>
            <person name="Jiang P.X."/>
            <person name="Jones T."/>
            <person name="Kawai J."/>
            <person name="Kamiya A."/>
            <person name="Meyers C."/>
            <person name="Nakajima M."/>
            <person name="Narusaka M."/>
            <person name="Seki M."/>
            <person name="Sakurai T."/>
            <person name="Satou M."/>
            <person name="Tamse R."/>
            <person name="Vaysberg M."/>
            <person name="Wallender E.K."/>
            <person name="Wong C."/>
            <person name="Yamamura Y."/>
            <person name="Yuan S."/>
            <person name="Shinozaki K."/>
            <person name="Davis R.W."/>
            <person name="Theologis A."/>
            <person name="Ecker J.R."/>
        </authorList>
    </citation>
    <scope>NUCLEOTIDE SEQUENCE [LARGE SCALE MRNA]</scope>
    <source>
        <strain>cv. Columbia</strain>
    </source>
</reference>
<reference key="5">
    <citation type="journal article" date="1997" name="J. Cell Biol.">
        <title>The Arabidopsis KNOLLE protein is a cytokinesis-specific syntaxin.</title>
        <authorList>
            <person name="Lauber M.H."/>
            <person name="Waizenegger I."/>
            <person name="Steinmann T."/>
            <person name="Schwarz H."/>
            <person name="Mayer U."/>
            <person name="Hwang I."/>
            <person name="Lukowitz W."/>
            <person name="Juergens G."/>
        </authorList>
    </citation>
    <scope>CHARACTERIZATION</scope>
</reference>
<reference key="6">
    <citation type="journal article" date="2001" name="J. Cell Biol.">
        <title>Functional characterization of the KNOLLE-interacting t-SNARE AtSNAP33 and its role in plant cytokinesis.</title>
        <authorList>
            <person name="Heese M."/>
            <person name="Gansel X."/>
            <person name="Sticher L."/>
            <person name="Wick P."/>
            <person name="Grebe M."/>
            <person name="Granier F."/>
            <person name="Juergens G."/>
        </authorList>
    </citation>
    <scope>INTERACTION WITH SNAP33</scope>
</reference>
<reference key="7">
    <citation type="journal article" date="2001" name="J. Cell Biol.">
        <title>The cytokinesis gene KEULE encodes a Sec1 protein that binds the syntaxin KNOLLE.</title>
        <authorList>
            <person name="Assaad F.F."/>
            <person name="Huet Y."/>
            <person name="Mayer U."/>
            <person name="Juergens G."/>
        </authorList>
    </citation>
    <scope>INTERACTION WITH KEULE</scope>
</reference>
<reference key="8">
    <citation type="journal article" date="2002" name="Plant Physiol.">
        <title>NPSN11 is a cell plate-associated SNARE protein that interacts with the syntaxin KNOLLE.</title>
        <authorList>
            <person name="Zheng H."/>
            <person name="Bednarek S.Y."/>
            <person name="Sanderfoot A.A."/>
            <person name="Alonso J."/>
            <person name="Ecker J.R."/>
            <person name="Raikhel N.V."/>
        </authorList>
    </citation>
    <scope>INTERACTION WITH NPSN11</scope>
</reference>
<keyword id="KW-0007">Acetylation</keyword>
<keyword id="KW-0131">Cell cycle</keyword>
<keyword id="KW-0132">Cell division</keyword>
<keyword id="KW-0175">Coiled coil</keyword>
<keyword id="KW-0472">Membrane</keyword>
<keyword id="KW-0653">Protein transport</keyword>
<keyword id="KW-1185">Reference proteome</keyword>
<keyword id="KW-0812">Transmembrane</keyword>
<keyword id="KW-1133">Transmembrane helix</keyword>
<keyword id="KW-0813">Transport</keyword>
<sequence length="310" mass="35275">MNDLMTKSFMSYVDLKKAAMKDMEAGPDFDLEMASTKADKMDENLSSFLEEAEYVKAEMGLISETLARIEQYHEESKGVHKAESVKSLRNKISNEIVSGLRKAKSIKSKLEEMDKANKEIKRLSGTPVYRSRTAVTNGLRKKLKEVMMEFQGLRQKMMSEYKETVERRYFTVTGEHANDEMIEKIITDNAGGEEFLTRAIQEHGKGKVLETVVEIQDRYDAAKEIEKSLLELHQVFLDMAVMVESQGEQMDEIEHHVINASHYVADGANELKTAKSHQRNSRKWMCIGIIVLLLIILIVVIPIITSFSSS</sequence>
<name>SY111_ARATH</name>
<evidence type="ECO:0000250" key="1">
    <source>
        <dbReference type="UniProtKB" id="Q9ZSD4"/>
    </source>
</evidence>
<evidence type="ECO:0000255" key="2"/>
<evidence type="ECO:0000255" key="3">
    <source>
        <dbReference type="PROSITE-ProRule" id="PRU00202"/>
    </source>
</evidence>
<evidence type="ECO:0000269" key="4">
    <source>
    </source>
</evidence>
<evidence type="ECO:0000269" key="5">
    <source>
    </source>
</evidence>
<evidence type="ECO:0000269" key="6">
    <source>
    </source>
</evidence>
<evidence type="ECO:0000305" key="7"/>